<gene>
    <name evidence="1" type="primary">rpsB</name>
    <name type="ordered locus">PEPE_0877</name>
</gene>
<sequence>MSVISMKQLLEAGVHFGHQTRRWNPKMKPFIFTERNGIYIIDLQKTVKLIDNAYNFVKDVAANDGVVLFVGTKKQAQTAIEEEAKRAGQYFVNHRWLGGTLTNWNTIQKRIKRLKDLKAMEEDGTFDRLPKKEVALLNKQKDKLEKFLGGIEDMPHTPDVLFVVDPRKEQIAIKEAQKLNIPVVAMVDTNSDPDQVDVIIPSNDDAIRAVRLITAKMADAVIEGRQGEDEEEASQEVAEGVSKDSLEDLKKSVEEGSNEE</sequence>
<proteinExistence type="inferred from homology"/>
<reference key="1">
    <citation type="journal article" date="2006" name="Proc. Natl. Acad. Sci. U.S.A.">
        <title>Comparative genomics of the lactic acid bacteria.</title>
        <authorList>
            <person name="Makarova K.S."/>
            <person name="Slesarev A."/>
            <person name="Wolf Y.I."/>
            <person name="Sorokin A."/>
            <person name="Mirkin B."/>
            <person name="Koonin E.V."/>
            <person name="Pavlov A."/>
            <person name="Pavlova N."/>
            <person name="Karamychev V."/>
            <person name="Polouchine N."/>
            <person name="Shakhova V."/>
            <person name="Grigoriev I."/>
            <person name="Lou Y."/>
            <person name="Rohksar D."/>
            <person name="Lucas S."/>
            <person name="Huang K."/>
            <person name="Goodstein D.M."/>
            <person name="Hawkins T."/>
            <person name="Plengvidhya V."/>
            <person name="Welker D."/>
            <person name="Hughes J."/>
            <person name="Goh Y."/>
            <person name="Benson A."/>
            <person name="Baldwin K."/>
            <person name="Lee J.-H."/>
            <person name="Diaz-Muniz I."/>
            <person name="Dosti B."/>
            <person name="Smeianov V."/>
            <person name="Wechter W."/>
            <person name="Barabote R."/>
            <person name="Lorca G."/>
            <person name="Altermann E."/>
            <person name="Barrangou R."/>
            <person name="Ganesan B."/>
            <person name="Xie Y."/>
            <person name="Rawsthorne H."/>
            <person name="Tamir D."/>
            <person name="Parker C."/>
            <person name="Breidt F."/>
            <person name="Broadbent J.R."/>
            <person name="Hutkins R."/>
            <person name="O'Sullivan D."/>
            <person name="Steele J."/>
            <person name="Unlu G."/>
            <person name="Saier M.H. Jr."/>
            <person name="Klaenhammer T."/>
            <person name="Richardson P."/>
            <person name="Kozyavkin S."/>
            <person name="Weimer B.C."/>
            <person name="Mills D.A."/>
        </authorList>
    </citation>
    <scope>NUCLEOTIDE SEQUENCE [LARGE SCALE GENOMIC DNA]</scope>
    <source>
        <strain>ATCC 25745 / CCUG 21536 / LMG 10740 / 183-1w</strain>
    </source>
</reference>
<feature type="chain" id="PRO_1000004016" description="Small ribosomal subunit protein uS2">
    <location>
        <begin position="1"/>
        <end position="260"/>
    </location>
</feature>
<feature type="region of interest" description="Disordered" evidence="2">
    <location>
        <begin position="223"/>
        <end position="260"/>
    </location>
</feature>
<feature type="compositionally biased region" description="Basic and acidic residues" evidence="2">
    <location>
        <begin position="241"/>
        <end position="254"/>
    </location>
</feature>
<name>RS2_PEDPA</name>
<accession>Q03FT6</accession>
<protein>
    <recommendedName>
        <fullName evidence="1">Small ribosomal subunit protein uS2</fullName>
    </recommendedName>
    <alternativeName>
        <fullName evidence="3">30S ribosomal protein S2</fullName>
    </alternativeName>
</protein>
<evidence type="ECO:0000255" key="1">
    <source>
        <dbReference type="HAMAP-Rule" id="MF_00291"/>
    </source>
</evidence>
<evidence type="ECO:0000256" key="2">
    <source>
        <dbReference type="SAM" id="MobiDB-lite"/>
    </source>
</evidence>
<evidence type="ECO:0000305" key="3"/>
<organism>
    <name type="scientific">Pediococcus pentosaceus (strain ATCC 25745 / CCUG 21536 / LMG 10740 / 183-1w)</name>
    <dbReference type="NCBI Taxonomy" id="278197"/>
    <lineage>
        <taxon>Bacteria</taxon>
        <taxon>Bacillati</taxon>
        <taxon>Bacillota</taxon>
        <taxon>Bacilli</taxon>
        <taxon>Lactobacillales</taxon>
        <taxon>Lactobacillaceae</taxon>
        <taxon>Pediococcus</taxon>
    </lineage>
</organism>
<keyword id="KW-0687">Ribonucleoprotein</keyword>
<keyword id="KW-0689">Ribosomal protein</keyword>
<comment type="similarity">
    <text evidence="1">Belongs to the universal ribosomal protein uS2 family.</text>
</comment>
<dbReference type="EMBL" id="CP000422">
    <property type="protein sequence ID" value="ABJ67936.1"/>
    <property type="molecule type" value="Genomic_DNA"/>
</dbReference>
<dbReference type="RefSeq" id="WP_002833605.1">
    <property type="nucleotide sequence ID" value="NC_008525.1"/>
</dbReference>
<dbReference type="SMR" id="Q03FT6"/>
<dbReference type="STRING" id="278197.PEPE_0877"/>
<dbReference type="GeneID" id="33062806"/>
<dbReference type="KEGG" id="ppe:PEPE_0877"/>
<dbReference type="eggNOG" id="COG0052">
    <property type="taxonomic scope" value="Bacteria"/>
</dbReference>
<dbReference type="HOGENOM" id="CLU_040318_1_2_9"/>
<dbReference type="OrthoDB" id="9808036at2"/>
<dbReference type="Proteomes" id="UP000000773">
    <property type="component" value="Chromosome"/>
</dbReference>
<dbReference type="GO" id="GO:0022627">
    <property type="term" value="C:cytosolic small ribosomal subunit"/>
    <property type="evidence" value="ECO:0007669"/>
    <property type="project" value="TreeGrafter"/>
</dbReference>
<dbReference type="GO" id="GO:0003735">
    <property type="term" value="F:structural constituent of ribosome"/>
    <property type="evidence" value="ECO:0007669"/>
    <property type="project" value="InterPro"/>
</dbReference>
<dbReference type="GO" id="GO:0006412">
    <property type="term" value="P:translation"/>
    <property type="evidence" value="ECO:0007669"/>
    <property type="project" value="UniProtKB-UniRule"/>
</dbReference>
<dbReference type="CDD" id="cd01425">
    <property type="entry name" value="RPS2"/>
    <property type="match status" value="1"/>
</dbReference>
<dbReference type="FunFam" id="1.10.287.610:FF:000001">
    <property type="entry name" value="30S ribosomal protein S2"/>
    <property type="match status" value="1"/>
</dbReference>
<dbReference type="Gene3D" id="3.40.50.10490">
    <property type="entry name" value="Glucose-6-phosphate isomerase like protein, domain 1"/>
    <property type="match status" value="1"/>
</dbReference>
<dbReference type="Gene3D" id="1.10.287.610">
    <property type="entry name" value="Helix hairpin bin"/>
    <property type="match status" value="1"/>
</dbReference>
<dbReference type="HAMAP" id="MF_00291_B">
    <property type="entry name" value="Ribosomal_uS2_B"/>
    <property type="match status" value="1"/>
</dbReference>
<dbReference type="InterPro" id="IPR001865">
    <property type="entry name" value="Ribosomal_uS2"/>
</dbReference>
<dbReference type="InterPro" id="IPR005706">
    <property type="entry name" value="Ribosomal_uS2_bac/mit/plastid"/>
</dbReference>
<dbReference type="InterPro" id="IPR018130">
    <property type="entry name" value="Ribosomal_uS2_CS"/>
</dbReference>
<dbReference type="InterPro" id="IPR023591">
    <property type="entry name" value="Ribosomal_uS2_flav_dom_sf"/>
</dbReference>
<dbReference type="NCBIfam" id="TIGR01011">
    <property type="entry name" value="rpsB_bact"/>
    <property type="match status" value="1"/>
</dbReference>
<dbReference type="PANTHER" id="PTHR12534">
    <property type="entry name" value="30S RIBOSOMAL PROTEIN S2 PROKARYOTIC AND ORGANELLAR"/>
    <property type="match status" value="1"/>
</dbReference>
<dbReference type="PANTHER" id="PTHR12534:SF0">
    <property type="entry name" value="SMALL RIBOSOMAL SUBUNIT PROTEIN US2M"/>
    <property type="match status" value="1"/>
</dbReference>
<dbReference type="Pfam" id="PF00318">
    <property type="entry name" value="Ribosomal_S2"/>
    <property type="match status" value="1"/>
</dbReference>
<dbReference type="PRINTS" id="PR00395">
    <property type="entry name" value="RIBOSOMALS2"/>
</dbReference>
<dbReference type="SUPFAM" id="SSF52313">
    <property type="entry name" value="Ribosomal protein S2"/>
    <property type="match status" value="1"/>
</dbReference>
<dbReference type="PROSITE" id="PS00962">
    <property type="entry name" value="RIBOSOMAL_S2_1"/>
    <property type="match status" value="1"/>
</dbReference>
<dbReference type="PROSITE" id="PS00963">
    <property type="entry name" value="RIBOSOMAL_S2_2"/>
    <property type="match status" value="1"/>
</dbReference>